<reference key="1">
    <citation type="submission" date="1999-08" db="EMBL/GenBank/DDBJ databases">
        <authorList>
            <person name="Labbe S."/>
            <person name="Thiele D.J."/>
        </authorList>
    </citation>
    <scope>NUCLEOTIDE SEQUENCE [MRNA]</scope>
</reference>
<reference key="2">
    <citation type="journal article" date="2002" name="Nature">
        <title>The genome sequence of Schizosaccharomyces pombe.</title>
        <authorList>
            <person name="Wood V."/>
            <person name="Gwilliam R."/>
            <person name="Rajandream M.A."/>
            <person name="Lyne M.H."/>
            <person name="Lyne R."/>
            <person name="Stewart A."/>
            <person name="Sgouros J.G."/>
            <person name="Peat N."/>
            <person name="Hayles J."/>
            <person name="Baker S.G."/>
            <person name="Basham D."/>
            <person name="Bowman S."/>
            <person name="Brooks K."/>
            <person name="Brown D."/>
            <person name="Brown S."/>
            <person name="Chillingworth T."/>
            <person name="Churcher C.M."/>
            <person name="Collins M."/>
            <person name="Connor R."/>
            <person name="Cronin A."/>
            <person name="Davis P."/>
            <person name="Feltwell T."/>
            <person name="Fraser A."/>
            <person name="Gentles S."/>
            <person name="Goble A."/>
            <person name="Hamlin N."/>
            <person name="Harris D.E."/>
            <person name="Hidalgo J."/>
            <person name="Hodgson G."/>
            <person name="Holroyd S."/>
            <person name="Hornsby T."/>
            <person name="Howarth S."/>
            <person name="Huckle E.J."/>
            <person name="Hunt S."/>
            <person name="Jagels K."/>
            <person name="James K.D."/>
            <person name="Jones L."/>
            <person name="Jones M."/>
            <person name="Leather S."/>
            <person name="McDonald S."/>
            <person name="McLean J."/>
            <person name="Mooney P."/>
            <person name="Moule S."/>
            <person name="Mungall K.L."/>
            <person name="Murphy L.D."/>
            <person name="Niblett D."/>
            <person name="Odell C."/>
            <person name="Oliver K."/>
            <person name="O'Neil S."/>
            <person name="Pearson D."/>
            <person name="Quail M.A."/>
            <person name="Rabbinowitsch E."/>
            <person name="Rutherford K.M."/>
            <person name="Rutter S."/>
            <person name="Saunders D."/>
            <person name="Seeger K."/>
            <person name="Sharp S."/>
            <person name="Skelton J."/>
            <person name="Simmonds M.N."/>
            <person name="Squares R."/>
            <person name="Squares S."/>
            <person name="Stevens K."/>
            <person name="Taylor K."/>
            <person name="Taylor R.G."/>
            <person name="Tivey A."/>
            <person name="Walsh S.V."/>
            <person name="Warren T."/>
            <person name="Whitehead S."/>
            <person name="Woodward J.R."/>
            <person name="Volckaert G."/>
            <person name="Aert R."/>
            <person name="Robben J."/>
            <person name="Grymonprez B."/>
            <person name="Weltjens I."/>
            <person name="Vanstreels E."/>
            <person name="Rieger M."/>
            <person name="Schaefer M."/>
            <person name="Mueller-Auer S."/>
            <person name="Gabel C."/>
            <person name="Fuchs M."/>
            <person name="Duesterhoeft A."/>
            <person name="Fritzc C."/>
            <person name="Holzer E."/>
            <person name="Moestl D."/>
            <person name="Hilbert H."/>
            <person name="Borzym K."/>
            <person name="Langer I."/>
            <person name="Beck A."/>
            <person name="Lehrach H."/>
            <person name="Reinhardt R."/>
            <person name="Pohl T.M."/>
            <person name="Eger P."/>
            <person name="Zimmermann W."/>
            <person name="Wedler H."/>
            <person name="Wambutt R."/>
            <person name="Purnelle B."/>
            <person name="Goffeau A."/>
            <person name="Cadieu E."/>
            <person name="Dreano S."/>
            <person name="Gloux S."/>
            <person name="Lelaure V."/>
            <person name="Mottier S."/>
            <person name="Galibert F."/>
            <person name="Aves S.J."/>
            <person name="Xiang Z."/>
            <person name="Hunt C."/>
            <person name="Moore K."/>
            <person name="Hurst S.M."/>
            <person name="Lucas M."/>
            <person name="Rochet M."/>
            <person name="Gaillardin C."/>
            <person name="Tallada V.A."/>
            <person name="Garzon A."/>
            <person name="Thode G."/>
            <person name="Daga R.R."/>
            <person name="Cruzado L."/>
            <person name="Jimenez J."/>
            <person name="Sanchez M."/>
            <person name="del Rey F."/>
            <person name="Benito J."/>
            <person name="Dominguez A."/>
            <person name="Revuelta J.L."/>
            <person name="Moreno S."/>
            <person name="Armstrong J."/>
            <person name="Forsburg S.L."/>
            <person name="Cerutti L."/>
            <person name="Lowe T."/>
            <person name="McCombie W.R."/>
            <person name="Paulsen I."/>
            <person name="Potashkin J."/>
            <person name="Shpakovski G.V."/>
            <person name="Ussery D."/>
            <person name="Barrell B.G."/>
            <person name="Nurse P."/>
        </authorList>
    </citation>
    <scope>NUCLEOTIDE SEQUENCE [LARGE SCALE GENOMIC DNA]</scope>
    <source>
        <strain>972 / ATCC 24843</strain>
    </source>
</reference>
<accession>O94588</accession>
<keyword id="KW-0186">Copper</keyword>
<keyword id="KW-0238">DNA-binding</keyword>
<keyword id="KW-0479">Metal-binding</keyword>
<keyword id="KW-0539">Nucleus</keyword>
<keyword id="KW-1185">Reference proteome</keyword>
<keyword id="KW-0804">Transcription</keyword>
<keyword id="KW-0805">Transcription regulation</keyword>
<keyword id="KW-0862">Zinc</keyword>
<dbReference type="EMBL" id="AJ243834">
    <property type="protein sequence ID" value="CAB52306.1"/>
    <property type="molecule type" value="mRNA"/>
</dbReference>
<dbReference type="EMBL" id="CU329672">
    <property type="protein sequence ID" value="CAA21819.1"/>
    <property type="molecule type" value="Genomic_DNA"/>
</dbReference>
<dbReference type="PIR" id="T43665">
    <property type="entry name" value="T43665"/>
</dbReference>
<dbReference type="RefSeq" id="NP_588223.1">
    <property type="nucleotide sequence ID" value="NM_001023213.1"/>
</dbReference>
<dbReference type="SMR" id="O94588"/>
<dbReference type="BioGRID" id="276046">
    <property type="interactions" value="37"/>
</dbReference>
<dbReference type="STRING" id="284812.O94588"/>
<dbReference type="PaxDb" id="4896-SPCC584.02.1"/>
<dbReference type="EnsemblFungi" id="SPCC584.02.1">
    <property type="protein sequence ID" value="SPCC584.02.1:pep"/>
    <property type="gene ID" value="SPCC584.02"/>
</dbReference>
<dbReference type="GeneID" id="2539483"/>
<dbReference type="KEGG" id="spo:2539483"/>
<dbReference type="PomBase" id="SPCC584.02">
    <property type="gene designation" value="cuf2"/>
</dbReference>
<dbReference type="VEuPathDB" id="FungiDB:SPCC584.02"/>
<dbReference type="eggNOG" id="ENOG502QQ0T">
    <property type="taxonomic scope" value="Eukaryota"/>
</dbReference>
<dbReference type="HOGENOM" id="CLU_1518721_0_0_1"/>
<dbReference type="InParanoid" id="O94588"/>
<dbReference type="PRO" id="PR:O94588"/>
<dbReference type="Proteomes" id="UP000002485">
    <property type="component" value="Chromosome III"/>
</dbReference>
<dbReference type="GO" id="GO:0000785">
    <property type="term" value="C:chromatin"/>
    <property type="evidence" value="ECO:0000314"/>
    <property type="project" value="PomBase"/>
</dbReference>
<dbReference type="GO" id="GO:0005829">
    <property type="term" value="C:cytosol"/>
    <property type="evidence" value="ECO:0007005"/>
    <property type="project" value="PomBase"/>
</dbReference>
<dbReference type="GO" id="GO:0005634">
    <property type="term" value="C:nucleus"/>
    <property type="evidence" value="ECO:0007005"/>
    <property type="project" value="PomBase"/>
</dbReference>
<dbReference type="GO" id="GO:0005507">
    <property type="term" value="F:copper ion binding"/>
    <property type="evidence" value="ECO:0007669"/>
    <property type="project" value="InterPro"/>
</dbReference>
<dbReference type="GO" id="GO:0001228">
    <property type="term" value="F:DNA-binding transcription activator activity, RNA polymerase II-specific"/>
    <property type="evidence" value="ECO:0000269"/>
    <property type="project" value="PomBase"/>
</dbReference>
<dbReference type="GO" id="GO:0000978">
    <property type="term" value="F:RNA polymerase II cis-regulatory region sequence-specific DNA binding"/>
    <property type="evidence" value="ECO:0000250"/>
    <property type="project" value="PomBase"/>
</dbReference>
<dbReference type="GO" id="GO:0045944">
    <property type="term" value="P:positive regulation of transcription by RNA polymerase II"/>
    <property type="evidence" value="ECO:0000315"/>
    <property type="project" value="PomBase"/>
</dbReference>
<dbReference type="GO" id="GO:0006357">
    <property type="term" value="P:regulation of transcription by RNA polymerase II"/>
    <property type="evidence" value="ECO:0000315"/>
    <property type="project" value="PomBase"/>
</dbReference>
<dbReference type="FunFam" id="3.90.430.10:FF:000001">
    <property type="entry name" value="Copper fist DNA-binding protein"/>
    <property type="match status" value="1"/>
</dbReference>
<dbReference type="Gene3D" id="3.90.430.10">
    <property type="entry name" value="Copper fist DNA-binding domain"/>
    <property type="match status" value="1"/>
</dbReference>
<dbReference type="InterPro" id="IPR051763">
    <property type="entry name" value="Copper_Homeo_Regul"/>
</dbReference>
<dbReference type="InterPro" id="IPR001083">
    <property type="entry name" value="Cu_fist_DNA-bd_dom"/>
</dbReference>
<dbReference type="InterPro" id="IPR036395">
    <property type="entry name" value="Cu_fist_DNA-bd_dom_sf"/>
</dbReference>
<dbReference type="PANTHER" id="PTHR28088">
    <property type="entry name" value="TRANSCRIPTIONAL ACTIVATOR HAA1-RELATED"/>
    <property type="match status" value="1"/>
</dbReference>
<dbReference type="PANTHER" id="PTHR28088:SF5">
    <property type="entry name" value="TRANSCRIPTIONAL ACTIVATOR HAA1-RELATED"/>
    <property type="match status" value="1"/>
</dbReference>
<dbReference type="Pfam" id="PF00649">
    <property type="entry name" value="Copper-fist"/>
    <property type="match status" value="1"/>
</dbReference>
<dbReference type="PRINTS" id="PR00617">
    <property type="entry name" value="COPPERFIST"/>
</dbReference>
<dbReference type="SMART" id="SM01090">
    <property type="entry name" value="Copper-fist"/>
    <property type="match status" value="1"/>
</dbReference>
<dbReference type="SMART" id="SM00412">
    <property type="entry name" value="Cu_FIST"/>
    <property type="match status" value="1"/>
</dbReference>
<dbReference type="SUPFAM" id="SSF57879">
    <property type="entry name" value="Zinc domain conserved in yeast copper-regulated transcription factors"/>
    <property type="match status" value="1"/>
</dbReference>
<dbReference type="PROSITE" id="PS01119">
    <property type="entry name" value="COPPER_FIST_1"/>
    <property type="match status" value="1"/>
</dbReference>
<dbReference type="PROSITE" id="PS50073">
    <property type="entry name" value="COPPER_FIST_2"/>
    <property type="match status" value="1"/>
</dbReference>
<name>CUF2_SCHPO</name>
<comment type="subcellular location">
    <subcellularLocation>
        <location evidence="2">Nucleus</location>
    </subcellularLocation>
</comment>
<protein>
    <recommendedName>
        <fullName>Copper-binding regulatory protein cuf2</fullName>
    </recommendedName>
    <alternativeName>
        <fullName>Copper homeostasis protein</fullName>
    </alternativeName>
</protein>
<evidence type="ECO:0000255" key="1">
    <source>
        <dbReference type="PROSITE-ProRule" id="PRU00055"/>
    </source>
</evidence>
<evidence type="ECO:0000305" key="2"/>
<gene>
    <name type="primary">cuf2</name>
    <name type="ORF">SPCC584.02</name>
</gene>
<proteinExistence type="evidence at transcript level"/>
<sequence length="177" mass="20070">MIIIDGKNYACVVCLRGHRGSSCQHQERALIEVRTRGRPLLCKKCRAIKQQLKSNLKCVCHLQPFLPFANEYQELLNFTQKNPILASLFLFSTDKDIMNSSLNPASQAYTFDLGRTLPISEDILGYRKPLSLTDASNRIDASQLNEKENDSFTINQEADIFNFAKYLHSKDDISGIP</sequence>
<organism>
    <name type="scientific">Schizosaccharomyces pombe (strain 972 / ATCC 24843)</name>
    <name type="common">Fission yeast</name>
    <dbReference type="NCBI Taxonomy" id="284812"/>
    <lineage>
        <taxon>Eukaryota</taxon>
        <taxon>Fungi</taxon>
        <taxon>Dikarya</taxon>
        <taxon>Ascomycota</taxon>
        <taxon>Taphrinomycotina</taxon>
        <taxon>Schizosaccharomycetes</taxon>
        <taxon>Schizosaccharomycetales</taxon>
        <taxon>Schizosaccharomycetaceae</taxon>
        <taxon>Schizosaccharomyces</taxon>
    </lineage>
</organism>
<feature type="chain" id="PRO_0000194931" description="Copper-binding regulatory protein cuf2">
    <location>
        <begin position="1"/>
        <end position="177"/>
    </location>
</feature>
<feature type="DNA-binding region" description="Copper-fist" evidence="1">
    <location>
        <begin position="1"/>
        <end position="40"/>
    </location>
</feature>
<feature type="binding site" evidence="1">
    <location>
        <position position="11"/>
    </location>
    <ligand>
        <name>Zn(2+)</name>
        <dbReference type="ChEBI" id="CHEBI:29105"/>
    </ligand>
</feature>
<feature type="binding site" evidence="1">
    <location>
        <position position="14"/>
    </location>
    <ligand>
        <name>Zn(2+)</name>
        <dbReference type="ChEBI" id="CHEBI:29105"/>
    </ligand>
</feature>
<feature type="binding site" evidence="1">
    <location>
        <position position="23"/>
    </location>
    <ligand>
        <name>Zn(2+)</name>
        <dbReference type="ChEBI" id="CHEBI:29105"/>
    </ligand>
</feature>
<feature type="binding site" evidence="1">
    <location>
        <position position="25"/>
    </location>
    <ligand>
        <name>Zn(2+)</name>
        <dbReference type="ChEBI" id="CHEBI:29105"/>
    </ligand>
</feature>